<name>ENTP3_HUMAN</name>
<sequence length="529" mass="59105">MFTVLTRQPCEQAGLKALYRTPTIIALVVLLVSIVVLVSITVIQIHKQEVLPPGLKYGIVLDAGSSRTTVYVYQWPAEKENNTGVVSQTFKCSVKGSGISSYGNNPQDVPRAFEECMQKVKGQVPSHLHGSTPIHLGATAGMRLLRLQNETAANEVLESIQSYFKSQPFDFRGAQIISGQEEGVYGWITANYLMGNFLEKNLWHMWVHPHGVETTGALDLGGASTQISFVAGEKMDLNTSDIMQVSLYGYVYTLYTHSFQCYGRNEAEKKFLAMLLQNSPTKNHLTNPCYPRDYSISFTMGHVFDSLCTVDQRPESYNPNDVITFEGTGDPSLCKEKVASIFDFKACHDQETCSFDGVYQPKIKGPFVAFAGFYYTASALNLSGSFSLDTFNSSTWNFCSQNWSQLPLLLPKFDEVYARSYCFSANYIYHLFVNGYKFTEETWPQIHFEKEVGNSSIAWSLGYMLSLTNQIPAESPLIRLPIEPPVFVGTLAFFTAAALLCLAFLAYLCSATRRKRHSEHAFDHAVDSD</sequence>
<organism>
    <name type="scientific">Homo sapiens</name>
    <name type="common">Human</name>
    <dbReference type="NCBI Taxonomy" id="9606"/>
    <lineage>
        <taxon>Eukaryota</taxon>
        <taxon>Metazoa</taxon>
        <taxon>Chordata</taxon>
        <taxon>Craniata</taxon>
        <taxon>Vertebrata</taxon>
        <taxon>Euteleostomi</taxon>
        <taxon>Mammalia</taxon>
        <taxon>Eutheria</taxon>
        <taxon>Euarchontoglires</taxon>
        <taxon>Primates</taxon>
        <taxon>Haplorrhini</taxon>
        <taxon>Catarrhini</taxon>
        <taxon>Hominidae</taxon>
        <taxon>Homo</taxon>
    </lineage>
</organism>
<accession>O75355</accession>
<accession>B2R8D0</accession>
<accession>G5E9N0</accession>
<accession>O60495</accession>
<accession>Q8N6K2</accession>
<keyword id="KW-0025">Alternative splicing</keyword>
<keyword id="KW-0067">ATP-binding</keyword>
<keyword id="KW-0106">Calcium</keyword>
<keyword id="KW-1003">Cell membrane</keyword>
<keyword id="KW-1015">Disulfide bond</keyword>
<keyword id="KW-0325">Glycoprotein</keyword>
<keyword id="KW-0378">Hydrolase</keyword>
<keyword id="KW-0460">Magnesium</keyword>
<keyword id="KW-0472">Membrane</keyword>
<keyword id="KW-0547">Nucleotide-binding</keyword>
<keyword id="KW-1267">Proteomics identification</keyword>
<keyword id="KW-1185">Reference proteome</keyword>
<keyword id="KW-0812">Transmembrane</keyword>
<keyword id="KW-1133">Transmembrane helix</keyword>
<gene>
    <name type="primary">ENTPD3</name>
    <name evidence="11" type="synonym">CD39L3</name>
</gene>
<reference key="1">
    <citation type="journal article" date="1998" name="Genomics">
        <title>The CD39-like gene family: identification of three new human members (CD39L2, CD39L3, and CD39L4), their murine homologues, and a member of the gene family from Drosophila melanogaster.</title>
        <authorList>
            <person name="Chadwick B.P."/>
            <person name="Frischauf A.-M."/>
        </authorList>
    </citation>
    <scope>NUCLEOTIDE SEQUENCE [MRNA] (ISOFORM 1)</scope>
    <scope>TISSUE SPECIFICITY</scope>
    <scope>VARIANT VAL-496</scope>
    <source>
        <tissue>Keratinocyte</tissue>
    </source>
</reference>
<reference key="2">
    <citation type="journal article" date="1998" name="Biochim. Biophys. Acta">
        <title>Cloning, sequencing, and expression of a human brain ecto-apyrase related to both the ecto-ATPases and CD39 ecto-apyrases.</title>
        <authorList>
            <person name="Smith T.M."/>
            <person name="Kirley T.L."/>
        </authorList>
    </citation>
    <scope>NUCLEOTIDE SEQUENCE [MRNA] (ISOFORM 1)</scope>
    <scope>CHARACTERIZATION</scope>
    <source>
        <tissue>Brain</tissue>
    </source>
</reference>
<reference key="3">
    <citation type="submission" date="2001-04" db="EMBL/GenBank/DDBJ databases">
        <authorList>
            <person name="Smith T.M."/>
            <person name="Kirley T.L."/>
        </authorList>
    </citation>
    <scope>SEQUENCE REVISION</scope>
</reference>
<reference key="4">
    <citation type="journal article" date="2004" name="Nat. Genet.">
        <title>Complete sequencing and characterization of 21,243 full-length human cDNAs.</title>
        <authorList>
            <person name="Ota T."/>
            <person name="Suzuki Y."/>
            <person name="Nishikawa T."/>
            <person name="Otsuki T."/>
            <person name="Sugiyama T."/>
            <person name="Irie R."/>
            <person name="Wakamatsu A."/>
            <person name="Hayashi K."/>
            <person name="Sato H."/>
            <person name="Nagai K."/>
            <person name="Kimura K."/>
            <person name="Makita H."/>
            <person name="Sekine M."/>
            <person name="Obayashi M."/>
            <person name="Nishi T."/>
            <person name="Shibahara T."/>
            <person name="Tanaka T."/>
            <person name="Ishii S."/>
            <person name="Yamamoto J."/>
            <person name="Saito K."/>
            <person name="Kawai Y."/>
            <person name="Isono Y."/>
            <person name="Nakamura Y."/>
            <person name="Nagahari K."/>
            <person name="Murakami K."/>
            <person name="Yasuda T."/>
            <person name="Iwayanagi T."/>
            <person name="Wagatsuma M."/>
            <person name="Shiratori A."/>
            <person name="Sudo H."/>
            <person name="Hosoiri T."/>
            <person name="Kaku Y."/>
            <person name="Kodaira H."/>
            <person name="Kondo H."/>
            <person name="Sugawara M."/>
            <person name="Takahashi M."/>
            <person name="Kanda K."/>
            <person name="Yokoi T."/>
            <person name="Furuya T."/>
            <person name="Kikkawa E."/>
            <person name="Omura Y."/>
            <person name="Abe K."/>
            <person name="Kamihara K."/>
            <person name="Katsuta N."/>
            <person name="Sato K."/>
            <person name="Tanikawa M."/>
            <person name="Yamazaki M."/>
            <person name="Ninomiya K."/>
            <person name="Ishibashi T."/>
            <person name="Yamashita H."/>
            <person name="Murakawa K."/>
            <person name="Fujimori K."/>
            <person name="Tanai H."/>
            <person name="Kimata M."/>
            <person name="Watanabe M."/>
            <person name="Hiraoka S."/>
            <person name="Chiba Y."/>
            <person name="Ishida S."/>
            <person name="Ono Y."/>
            <person name="Takiguchi S."/>
            <person name="Watanabe S."/>
            <person name="Yosida M."/>
            <person name="Hotuta T."/>
            <person name="Kusano J."/>
            <person name="Kanehori K."/>
            <person name="Takahashi-Fujii A."/>
            <person name="Hara H."/>
            <person name="Tanase T.-O."/>
            <person name="Nomura Y."/>
            <person name="Togiya S."/>
            <person name="Komai F."/>
            <person name="Hara R."/>
            <person name="Takeuchi K."/>
            <person name="Arita M."/>
            <person name="Imose N."/>
            <person name="Musashino K."/>
            <person name="Yuuki H."/>
            <person name="Oshima A."/>
            <person name="Sasaki N."/>
            <person name="Aotsuka S."/>
            <person name="Yoshikawa Y."/>
            <person name="Matsunawa H."/>
            <person name="Ichihara T."/>
            <person name="Shiohata N."/>
            <person name="Sano S."/>
            <person name="Moriya S."/>
            <person name="Momiyama H."/>
            <person name="Satoh N."/>
            <person name="Takami S."/>
            <person name="Terashima Y."/>
            <person name="Suzuki O."/>
            <person name="Nakagawa S."/>
            <person name="Senoh A."/>
            <person name="Mizoguchi H."/>
            <person name="Goto Y."/>
            <person name="Shimizu F."/>
            <person name="Wakebe H."/>
            <person name="Hishigaki H."/>
            <person name="Watanabe T."/>
            <person name="Sugiyama A."/>
            <person name="Takemoto M."/>
            <person name="Kawakami B."/>
            <person name="Yamazaki M."/>
            <person name="Watanabe K."/>
            <person name="Kumagai A."/>
            <person name="Itakura S."/>
            <person name="Fukuzumi Y."/>
            <person name="Fujimori Y."/>
            <person name="Komiyama M."/>
            <person name="Tashiro H."/>
            <person name="Tanigami A."/>
            <person name="Fujiwara T."/>
            <person name="Ono T."/>
            <person name="Yamada K."/>
            <person name="Fujii Y."/>
            <person name="Ozaki K."/>
            <person name="Hirao M."/>
            <person name="Ohmori Y."/>
            <person name="Kawabata A."/>
            <person name="Hikiji T."/>
            <person name="Kobatake N."/>
            <person name="Inagaki H."/>
            <person name="Ikema Y."/>
            <person name="Okamoto S."/>
            <person name="Okitani R."/>
            <person name="Kawakami T."/>
            <person name="Noguchi S."/>
            <person name="Itoh T."/>
            <person name="Shigeta K."/>
            <person name="Senba T."/>
            <person name="Matsumura K."/>
            <person name="Nakajima Y."/>
            <person name="Mizuno T."/>
            <person name="Morinaga M."/>
            <person name="Sasaki M."/>
            <person name="Togashi T."/>
            <person name="Oyama M."/>
            <person name="Hata H."/>
            <person name="Watanabe M."/>
            <person name="Komatsu T."/>
            <person name="Mizushima-Sugano J."/>
            <person name="Satoh T."/>
            <person name="Shirai Y."/>
            <person name="Takahashi Y."/>
            <person name="Nakagawa K."/>
            <person name="Okumura K."/>
            <person name="Nagase T."/>
            <person name="Nomura N."/>
            <person name="Kikuchi H."/>
            <person name="Masuho Y."/>
            <person name="Yamashita R."/>
            <person name="Nakai K."/>
            <person name="Yada T."/>
            <person name="Nakamura Y."/>
            <person name="Ohara O."/>
            <person name="Isogai T."/>
            <person name="Sugano S."/>
        </authorList>
    </citation>
    <scope>NUCLEOTIDE SEQUENCE [LARGE SCALE MRNA] (ISOFORM 1)</scope>
    <source>
        <tissue>Esophagus</tissue>
    </source>
</reference>
<reference key="5">
    <citation type="journal article" date="2006" name="Nature">
        <title>The DNA sequence, annotation and analysis of human chromosome 3.</title>
        <authorList>
            <person name="Muzny D.M."/>
            <person name="Scherer S.E."/>
            <person name="Kaul R."/>
            <person name="Wang J."/>
            <person name="Yu J."/>
            <person name="Sudbrak R."/>
            <person name="Buhay C.J."/>
            <person name="Chen R."/>
            <person name="Cree A."/>
            <person name="Ding Y."/>
            <person name="Dugan-Rocha S."/>
            <person name="Gill R."/>
            <person name="Gunaratne P."/>
            <person name="Harris R.A."/>
            <person name="Hawes A.C."/>
            <person name="Hernandez J."/>
            <person name="Hodgson A.V."/>
            <person name="Hume J."/>
            <person name="Jackson A."/>
            <person name="Khan Z.M."/>
            <person name="Kovar-Smith C."/>
            <person name="Lewis L.R."/>
            <person name="Lozado R.J."/>
            <person name="Metzker M.L."/>
            <person name="Milosavljevic A."/>
            <person name="Miner G.R."/>
            <person name="Morgan M.B."/>
            <person name="Nazareth L.V."/>
            <person name="Scott G."/>
            <person name="Sodergren E."/>
            <person name="Song X.-Z."/>
            <person name="Steffen D."/>
            <person name="Wei S."/>
            <person name="Wheeler D.A."/>
            <person name="Wright M.W."/>
            <person name="Worley K.C."/>
            <person name="Yuan Y."/>
            <person name="Zhang Z."/>
            <person name="Adams C.Q."/>
            <person name="Ansari-Lari M.A."/>
            <person name="Ayele M."/>
            <person name="Brown M.J."/>
            <person name="Chen G."/>
            <person name="Chen Z."/>
            <person name="Clendenning J."/>
            <person name="Clerc-Blankenburg K.P."/>
            <person name="Chen R."/>
            <person name="Chen Z."/>
            <person name="Davis C."/>
            <person name="Delgado O."/>
            <person name="Dinh H.H."/>
            <person name="Dong W."/>
            <person name="Draper H."/>
            <person name="Ernst S."/>
            <person name="Fu G."/>
            <person name="Gonzalez-Garay M.L."/>
            <person name="Garcia D.K."/>
            <person name="Gillett W."/>
            <person name="Gu J."/>
            <person name="Hao B."/>
            <person name="Haugen E."/>
            <person name="Havlak P."/>
            <person name="He X."/>
            <person name="Hennig S."/>
            <person name="Hu S."/>
            <person name="Huang W."/>
            <person name="Jackson L.R."/>
            <person name="Jacob L.S."/>
            <person name="Kelly S.H."/>
            <person name="Kube M."/>
            <person name="Levy R."/>
            <person name="Li Z."/>
            <person name="Liu B."/>
            <person name="Liu J."/>
            <person name="Liu W."/>
            <person name="Lu J."/>
            <person name="Maheshwari M."/>
            <person name="Nguyen B.-V."/>
            <person name="Okwuonu G.O."/>
            <person name="Palmeiri A."/>
            <person name="Pasternak S."/>
            <person name="Perez L.M."/>
            <person name="Phelps K.A."/>
            <person name="Plopper F.J."/>
            <person name="Qiang B."/>
            <person name="Raymond C."/>
            <person name="Rodriguez R."/>
            <person name="Saenphimmachak C."/>
            <person name="Santibanez J."/>
            <person name="Shen H."/>
            <person name="Shen Y."/>
            <person name="Subramanian S."/>
            <person name="Tabor P.E."/>
            <person name="Verduzco D."/>
            <person name="Waldron L."/>
            <person name="Wang J."/>
            <person name="Wang J."/>
            <person name="Wang Q."/>
            <person name="Williams G.A."/>
            <person name="Wong G.K.-S."/>
            <person name="Yao Z."/>
            <person name="Zhang J."/>
            <person name="Zhang X."/>
            <person name="Zhao G."/>
            <person name="Zhou J."/>
            <person name="Zhou Y."/>
            <person name="Nelson D."/>
            <person name="Lehrach H."/>
            <person name="Reinhardt R."/>
            <person name="Naylor S.L."/>
            <person name="Yang H."/>
            <person name="Olson M."/>
            <person name="Weinstock G."/>
            <person name="Gibbs R.A."/>
        </authorList>
    </citation>
    <scope>NUCLEOTIDE SEQUENCE [LARGE SCALE GENOMIC DNA]</scope>
</reference>
<reference key="6">
    <citation type="submission" date="2005-07" db="EMBL/GenBank/DDBJ databases">
        <authorList>
            <person name="Mural R.J."/>
            <person name="Istrail S."/>
            <person name="Sutton G.G."/>
            <person name="Florea L."/>
            <person name="Halpern A.L."/>
            <person name="Mobarry C.M."/>
            <person name="Lippert R."/>
            <person name="Walenz B."/>
            <person name="Shatkay H."/>
            <person name="Dew I."/>
            <person name="Miller J.R."/>
            <person name="Flanigan M.J."/>
            <person name="Edwards N.J."/>
            <person name="Bolanos R."/>
            <person name="Fasulo D."/>
            <person name="Halldorsson B.V."/>
            <person name="Hannenhalli S."/>
            <person name="Turner R."/>
            <person name="Yooseph S."/>
            <person name="Lu F."/>
            <person name="Nusskern D.R."/>
            <person name="Shue B.C."/>
            <person name="Zheng X.H."/>
            <person name="Zhong F."/>
            <person name="Delcher A.L."/>
            <person name="Huson D.H."/>
            <person name="Kravitz S.A."/>
            <person name="Mouchard L."/>
            <person name="Reinert K."/>
            <person name="Remington K.A."/>
            <person name="Clark A.G."/>
            <person name="Waterman M.S."/>
            <person name="Eichler E.E."/>
            <person name="Adams M.D."/>
            <person name="Hunkapiller M.W."/>
            <person name="Myers E.W."/>
            <person name="Venter J.C."/>
        </authorList>
    </citation>
    <scope>NUCLEOTIDE SEQUENCE [LARGE SCALE GENOMIC DNA]</scope>
</reference>
<reference key="7">
    <citation type="journal article" date="2004" name="Genome Res.">
        <title>The status, quality, and expansion of the NIH full-length cDNA project: the Mammalian Gene Collection (MGC).</title>
        <authorList>
            <consortium name="The MGC Project Team"/>
        </authorList>
    </citation>
    <scope>NUCLEOTIDE SEQUENCE [LARGE SCALE MRNA] (ISOFORM 2)</scope>
    <scope>VARIANT VAL-24</scope>
    <source>
        <tissue>Brain</tissue>
    </source>
</reference>
<reference key="8">
    <citation type="journal article" date="1999" name="Biochemistry">
        <title>Mutagenesis of two conserved tryptophan residues of the E-type ATPases: inactivation and conversion of an ecto-apyrase to an ecto-NTPase.</title>
        <authorList>
            <person name="Smith T.M."/>
            <person name="Lewis Carl S.A."/>
            <person name="Kirley T.L."/>
        </authorList>
    </citation>
    <scope>FUNCTION</scope>
    <scope>CATALYTIC ACTIVITY</scope>
    <scope>MUTAGENESIS OF TRP-187; ASP-219 AND TRP-459</scope>
</reference>
<reference key="9">
    <citation type="journal article" date="2001" name="Biochemistry">
        <title>Site-directed mutagenesis of human nucleoside triphosphate diphosphohydrolase 3: the importance of residues in the apyrase conserved regions.</title>
        <authorList>
            <person name="Yang F."/>
            <person name="Hicks-Berger C.A."/>
            <person name="Smith T.M."/>
            <person name="Kirley T.L."/>
        </authorList>
    </citation>
    <scope>FUNCTION</scope>
    <scope>CATALYTIC ACTIVITY</scope>
    <scope>COFACTOR</scope>
    <scope>MUTAGENESIS OF ARG-67; ARG-143; ARG-146; GLU-182; ASN-191; SER-224 AND GLN-226</scope>
</reference>
<reference key="10">
    <citation type="journal article" date="2005" name="Biochemistry">
        <title>Characterization of disulfide bonds in human nucleoside triphosphate diphosphohydrolase 3 (NTPDase3): implications for NTPDase structural modeling.</title>
        <authorList>
            <person name="Ivanenkov V.V."/>
            <person name="Meller J."/>
            <person name="Kirley T.L."/>
        </authorList>
    </citation>
    <scope>DISULFIDE BONDS</scope>
</reference>
<evidence type="ECO:0000250" key="1">
    <source>
        <dbReference type="UniProtKB" id="O35795"/>
    </source>
</evidence>
<evidence type="ECO:0000250" key="2">
    <source>
        <dbReference type="UniProtKB" id="Q8BFW6"/>
    </source>
</evidence>
<evidence type="ECO:0000255" key="3"/>
<evidence type="ECO:0000269" key="4">
    <source>
    </source>
</evidence>
<evidence type="ECO:0000269" key="5">
    <source>
    </source>
</evidence>
<evidence type="ECO:0000269" key="6">
    <source>
    </source>
</evidence>
<evidence type="ECO:0000269" key="7">
    <source>
    </source>
</evidence>
<evidence type="ECO:0000269" key="8">
    <source>
    </source>
</evidence>
<evidence type="ECO:0000303" key="9">
    <source>
    </source>
</evidence>
<evidence type="ECO:0000303" key="10">
    <source>
    </source>
</evidence>
<evidence type="ECO:0000303" key="11">
    <source>
    </source>
</evidence>
<evidence type="ECO:0000305" key="12"/>
<comment type="function">
    <text evidence="4 5">Has a threefold preference for the hydrolysis of ATP over ADP.</text>
</comment>
<comment type="catalytic activity">
    <reaction evidence="4 5">
        <text>a ribonucleoside 5'-triphosphate + 2 H2O = a ribonucleoside 5'-phosphate + 2 phosphate + 2 H(+)</text>
        <dbReference type="Rhea" id="RHEA:36795"/>
        <dbReference type="ChEBI" id="CHEBI:15377"/>
        <dbReference type="ChEBI" id="CHEBI:15378"/>
        <dbReference type="ChEBI" id="CHEBI:43474"/>
        <dbReference type="ChEBI" id="CHEBI:58043"/>
        <dbReference type="ChEBI" id="CHEBI:61557"/>
        <dbReference type="EC" id="3.6.1.5"/>
    </reaction>
</comment>
<comment type="cofactor">
    <cofactor evidence="5">
        <name>Ca(2+)</name>
        <dbReference type="ChEBI" id="CHEBI:29108"/>
    </cofactor>
    <cofactor evidence="5">
        <name>Mg(2+)</name>
        <dbReference type="ChEBI" id="CHEBI:18420"/>
    </cofactor>
</comment>
<comment type="interaction">
    <interactant intactId="EBI-10187968">
        <id>O75355</id>
    </interactant>
    <interactant intactId="EBI-7131783">
        <id>Q8N205</id>
        <label>SYNE4</label>
    </interactant>
    <organismsDiffer>false</organismsDiffer>
    <experiments>3</experiments>
</comment>
<comment type="interaction">
    <interactant intactId="EBI-12279764">
        <id>O75355-2</id>
    </interactant>
    <interactant intactId="EBI-11343438">
        <id>Q3SXY8</id>
        <label>ARL13B</label>
    </interactant>
    <organismsDiffer>false</organismsDiffer>
    <experiments>3</experiments>
</comment>
<comment type="interaction">
    <interactant intactId="EBI-12279764">
        <id>O75355-2</id>
    </interactant>
    <interactant intactId="EBI-6942903">
        <id>Q96BA8</id>
        <label>CREB3L1</label>
    </interactant>
    <organismsDiffer>false</organismsDiffer>
    <experiments>3</experiments>
</comment>
<comment type="interaction">
    <interactant intactId="EBI-12279764">
        <id>O75355-2</id>
    </interactant>
    <interactant intactId="EBI-781551">
        <id>Q9Y282</id>
        <label>ERGIC3</label>
    </interactant>
    <organismsDiffer>false</organismsDiffer>
    <experiments>3</experiments>
</comment>
<comment type="interaction">
    <interactant intactId="EBI-12279764">
        <id>O75355-2</id>
    </interactant>
    <interactant intactId="EBI-18304435">
        <id>Q5JX71</id>
        <label>FAM209A</label>
    </interactant>
    <organismsDiffer>false</organismsDiffer>
    <experiments>3</experiments>
</comment>
<comment type="interaction">
    <interactant intactId="EBI-12279764">
        <id>O75355-2</id>
    </interactant>
    <interactant intactId="EBI-12142257">
        <id>Q8TBE3</id>
        <label>FNDC9</label>
    </interactant>
    <organismsDiffer>false</organismsDiffer>
    <experiments>3</experiments>
</comment>
<comment type="interaction">
    <interactant intactId="EBI-12279764">
        <id>O75355-2</id>
    </interactant>
    <interactant intactId="EBI-2868927">
        <id>Q6P531</id>
        <label>GGT6</label>
    </interactant>
    <organismsDiffer>false</organismsDiffer>
    <experiments>3</experiments>
</comment>
<comment type="interaction">
    <interactant intactId="EBI-12279764">
        <id>O75355-2</id>
    </interactant>
    <interactant intactId="EBI-4289554">
        <id>Q99795</id>
        <label>GPA33</label>
    </interactant>
    <organismsDiffer>false</organismsDiffer>
    <experiments>3</experiments>
</comment>
<comment type="interaction">
    <interactant intactId="EBI-12279764">
        <id>O75355-2</id>
    </interactant>
    <interactant intactId="EBI-3905457">
        <id>P38484</id>
        <label>IFNGR2</label>
    </interactant>
    <organismsDiffer>false</organismsDiffer>
    <experiments>3</experiments>
</comment>
<comment type="interaction">
    <interactant intactId="EBI-12279764">
        <id>O75355-2</id>
    </interactant>
    <interactant intactId="EBI-17490413">
        <id>A8MZ59</id>
        <label>LEUTX</label>
    </interactant>
    <organismsDiffer>false</organismsDiffer>
    <experiments>3</experiments>
</comment>
<comment type="interaction">
    <interactant intactId="EBI-12279764">
        <id>O75355-2</id>
    </interactant>
    <interactant intactId="EBI-2820517">
        <id>Q8TAF8</id>
        <label>LHFPL5</label>
    </interactant>
    <organismsDiffer>false</organismsDiffer>
    <experiments>3</experiments>
</comment>
<comment type="interaction">
    <interactant intactId="EBI-12279764">
        <id>O75355-2</id>
    </interactant>
    <interactant intactId="EBI-17263240">
        <id>P15941-11</id>
        <label>MUC1</label>
    </interactant>
    <organismsDiffer>false</organismsDiffer>
    <experiments>3</experiments>
</comment>
<comment type="interaction">
    <interactant intactId="EBI-12279764">
        <id>O75355-2</id>
    </interactant>
    <interactant intactId="EBI-1220572">
        <id>P54829</id>
        <label>PTPN5</label>
    </interactant>
    <organismsDiffer>false</organismsDiffer>
    <experiments>3</experiments>
</comment>
<comment type="interaction">
    <interactant intactId="EBI-12279764">
        <id>O75355-2</id>
    </interactant>
    <interactant intactId="EBI-11956649">
        <id>P32856-2</id>
        <label>STX2</label>
    </interactant>
    <organismsDiffer>false</organismsDiffer>
    <experiments>3</experiments>
</comment>
<comment type="interaction">
    <interactant intactId="EBI-12279764">
        <id>O75355-2</id>
    </interactant>
    <interactant intactId="EBI-3915978">
        <id>Q96A25</id>
        <label>TMEM106A</label>
    </interactant>
    <organismsDiffer>false</organismsDiffer>
    <experiments>3</experiments>
</comment>
<comment type="subcellular location">
    <subcellularLocation>
        <location evidence="2">Cell membrane</location>
        <topology evidence="3">Multi-pass membrane protein</topology>
    </subcellularLocation>
</comment>
<comment type="alternative products">
    <event type="alternative splicing"/>
    <isoform>
        <id>O75355-1</id>
        <name>1</name>
        <sequence type="displayed"/>
    </isoform>
    <isoform>
        <id>O75355-2</id>
        <name>2</name>
        <sequence type="described" ref="VSP_054237"/>
    </isoform>
</comment>
<comment type="tissue specificity">
    <text evidence="8">Expressed in adult brain, pancreas, spleen and prostate (PubMed:9676430). Moderate or low expression is seen in most tissues (PubMed:9676430). Not expressed in liver and peripheral blood leukocytes (PubMed:9676430).</text>
</comment>
<comment type="similarity">
    <text evidence="12">Belongs to the GDA1/CD39 NTPase family.</text>
</comment>
<protein>
    <recommendedName>
        <fullName>Ectonucleoside triphosphate diphosphohydrolase 3</fullName>
        <shortName>NTPDase 3</shortName>
        <ecNumber>3.6.1.5</ecNumber>
    </recommendedName>
    <alternativeName>
        <fullName evidence="11">CD39 antigen-like 3</fullName>
    </alternativeName>
    <alternativeName>
        <fullName>Ecto-ATP diphosphohydrolase 3</fullName>
        <shortName>Ecto-ATPDase 3</shortName>
        <shortName>Ecto-ATPase 3</shortName>
    </alternativeName>
    <alternativeName>
        <fullName>Ecto-apyrase 3</fullName>
    </alternativeName>
    <alternativeName>
        <fullName evidence="10">HB6</fullName>
    </alternativeName>
</protein>
<dbReference type="EC" id="3.6.1.5"/>
<dbReference type="EMBL" id="AF039917">
    <property type="protein sequence ID" value="AAC39884.1"/>
    <property type="molecule type" value="mRNA"/>
</dbReference>
<dbReference type="EMBL" id="AF034840">
    <property type="protein sequence ID" value="AAC09236.2"/>
    <property type="molecule type" value="mRNA"/>
</dbReference>
<dbReference type="EMBL" id="AK313322">
    <property type="protein sequence ID" value="BAG36127.1"/>
    <property type="molecule type" value="mRNA"/>
</dbReference>
<dbReference type="EMBL" id="AC104186">
    <property type="status" value="NOT_ANNOTATED_CDS"/>
    <property type="molecule type" value="Genomic_DNA"/>
</dbReference>
<dbReference type="EMBL" id="CH471055">
    <property type="protein sequence ID" value="EAW64600.1"/>
    <property type="molecule type" value="Genomic_DNA"/>
</dbReference>
<dbReference type="EMBL" id="CH471055">
    <property type="protein sequence ID" value="EAW64601.1"/>
    <property type="molecule type" value="Genomic_DNA"/>
</dbReference>
<dbReference type="EMBL" id="BC029869">
    <property type="protein sequence ID" value="AAH29869.1"/>
    <property type="molecule type" value="mRNA"/>
</dbReference>
<dbReference type="CCDS" id="CCDS2691.1">
    <molecule id="O75355-1"/>
</dbReference>
<dbReference type="CCDS" id="CCDS74919.1">
    <molecule id="O75355-2"/>
</dbReference>
<dbReference type="RefSeq" id="NP_001239.2">
    <molecule id="O75355-1"/>
    <property type="nucleotide sequence ID" value="NM_001248.4"/>
</dbReference>
<dbReference type="RefSeq" id="NP_001278889.1">
    <molecule id="O75355-1"/>
    <property type="nucleotide sequence ID" value="NM_001291960.2"/>
</dbReference>
<dbReference type="RefSeq" id="NP_001278890.1">
    <molecule id="O75355-2"/>
    <property type="nucleotide sequence ID" value="NM_001291961.2"/>
</dbReference>
<dbReference type="SMR" id="O75355"/>
<dbReference type="BioGRID" id="107394">
    <property type="interactions" value="16"/>
</dbReference>
<dbReference type="FunCoup" id="O75355">
    <property type="interactions" value="385"/>
</dbReference>
<dbReference type="IntAct" id="O75355">
    <property type="interactions" value="15"/>
</dbReference>
<dbReference type="STRING" id="9606.ENSP00000301825"/>
<dbReference type="BindingDB" id="O75355"/>
<dbReference type="ChEMBL" id="CHEMBL5897"/>
<dbReference type="GlyConnect" id="2936">
    <property type="glycosylation" value="1 N-Linked glycan (1 site)"/>
</dbReference>
<dbReference type="GlyCosmos" id="O75355">
    <property type="glycosylation" value="7 sites, 2 glycans"/>
</dbReference>
<dbReference type="GlyGen" id="O75355">
    <property type="glycosylation" value="14 sites, 8 N-linked glycans (2 sites)"/>
</dbReference>
<dbReference type="iPTMnet" id="O75355"/>
<dbReference type="PhosphoSitePlus" id="O75355"/>
<dbReference type="SwissPalm" id="O75355"/>
<dbReference type="BioMuta" id="ENTPD3"/>
<dbReference type="jPOST" id="O75355"/>
<dbReference type="MassIVE" id="O75355"/>
<dbReference type="PaxDb" id="9606-ENSP00000301825"/>
<dbReference type="PeptideAtlas" id="O75355"/>
<dbReference type="ProteomicsDB" id="33989"/>
<dbReference type="ProteomicsDB" id="49922">
    <molecule id="O75355-1"/>
</dbReference>
<dbReference type="Antibodypedia" id="29006">
    <property type="antibodies" value="271 antibodies from 32 providers"/>
</dbReference>
<dbReference type="DNASU" id="956"/>
<dbReference type="Ensembl" id="ENST00000301825.8">
    <molecule id="O75355-1"/>
    <property type="protein sequence ID" value="ENSP00000301825.3"/>
    <property type="gene ID" value="ENSG00000168032.10"/>
</dbReference>
<dbReference type="Ensembl" id="ENST00000445129.1">
    <molecule id="O75355-2"/>
    <property type="protein sequence ID" value="ENSP00000404671.1"/>
    <property type="gene ID" value="ENSG00000168032.10"/>
</dbReference>
<dbReference type="Ensembl" id="ENST00000456402.5">
    <molecule id="O75355-1"/>
    <property type="protein sequence ID" value="ENSP00000401565.1"/>
    <property type="gene ID" value="ENSG00000168032.10"/>
</dbReference>
<dbReference type="GeneID" id="956"/>
<dbReference type="KEGG" id="hsa:956"/>
<dbReference type="MANE-Select" id="ENST00000301825.8">
    <property type="protein sequence ID" value="ENSP00000301825.3"/>
    <property type="RefSeq nucleotide sequence ID" value="NM_001248.4"/>
    <property type="RefSeq protein sequence ID" value="NP_001239.2"/>
</dbReference>
<dbReference type="UCSC" id="uc003ckd.5">
    <molecule id="O75355-1"/>
    <property type="organism name" value="human"/>
</dbReference>
<dbReference type="AGR" id="HGNC:3365"/>
<dbReference type="CTD" id="956"/>
<dbReference type="DisGeNET" id="956"/>
<dbReference type="GeneCards" id="ENTPD3"/>
<dbReference type="HGNC" id="HGNC:3365">
    <property type="gene designation" value="ENTPD3"/>
</dbReference>
<dbReference type="HPA" id="ENSG00000168032">
    <property type="expression patterns" value="Tissue enhanced (brain, cervix, salivary gland)"/>
</dbReference>
<dbReference type="MalaCards" id="ENTPD3"/>
<dbReference type="MIM" id="603161">
    <property type="type" value="gene"/>
</dbReference>
<dbReference type="neXtProt" id="NX_O75355"/>
<dbReference type="OpenTargets" id="ENSG00000168032"/>
<dbReference type="PharmGKB" id="PA27800"/>
<dbReference type="VEuPathDB" id="HostDB:ENSG00000168032"/>
<dbReference type="eggNOG" id="KOG1386">
    <property type="taxonomic scope" value="Eukaryota"/>
</dbReference>
<dbReference type="GeneTree" id="ENSGT01110000267162"/>
<dbReference type="HOGENOM" id="CLU_010246_2_3_1"/>
<dbReference type="InParanoid" id="O75355"/>
<dbReference type="OMA" id="GNAISDM"/>
<dbReference type="OrthoDB" id="6372431at2759"/>
<dbReference type="PAN-GO" id="O75355">
    <property type="GO annotations" value="4 GO annotations based on evolutionary models"/>
</dbReference>
<dbReference type="PhylomeDB" id="O75355"/>
<dbReference type="TreeFam" id="TF332859"/>
<dbReference type="BRENDA" id="3.6.1.5">
    <property type="organism ID" value="2681"/>
</dbReference>
<dbReference type="PathwayCommons" id="O75355"/>
<dbReference type="Reactome" id="R-HSA-8850843">
    <property type="pathway name" value="Phosphate bond hydrolysis by NTPDase proteins"/>
</dbReference>
<dbReference type="SABIO-RK" id="O75355"/>
<dbReference type="SignaLink" id="O75355"/>
<dbReference type="BioGRID-ORCS" id="956">
    <property type="hits" value="7 hits in 1138 CRISPR screens"/>
</dbReference>
<dbReference type="GeneWiki" id="ENTPD3"/>
<dbReference type="GenomeRNAi" id="956"/>
<dbReference type="Pharos" id="O75355">
    <property type="development level" value="Tchem"/>
</dbReference>
<dbReference type="PRO" id="PR:O75355"/>
<dbReference type="Proteomes" id="UP000005640">
    <property type="component" value="Chromosome 3"/>
</dbReference>
<dbReference type="RNAct" id="O75355">
    <property type="molecule type" value="protein"/>
</dbReference>
<dbReference type="Bgee" id="ENSG00000168032">
    <property type="expression patterns" value="Expressed in islet of Langerhans and 156 other cell types or tissues"/>
</dbReference>
<dbReference type="ExpressionAtlas" id="O75355">
    <property type="expression patterns" value="baseline and differential"/>
</dbReference>
<dbReference type="GO" id="GO:0005886">
    <property type="term" value="C:plasma membrane"/>
    <property type="evidence" value="ECO:0000318"/>
    <property type="project" value="GO_Central"/>
</dbReference>
<dbReference type="GO" id="GO:0004050">
    <property type="term" value="F:apyrase activity"/>
    <property type="evidence" value="ECO:0007669"/>
    <property type="project" value="UniProtKB-EC"/>
</dbReference>
<dbReference type="GO" id="GO:0005524">
    <property type="term" value="F:ATP binding"/>
    <property type="evidence" value="ECO:0007669"/>
    <property type="project" value="UniProtKB-KW"/>
</dbReference>
<dbReference type="GO" id="GO:0004382">
    <property type="term" value="F:GDP phosphatase activity"/>
    <property type="evidence" value="ECO:0000318"/>
    <property type="project" value="GO_Central"/>
</dbReference>
<dbReference type="GO" id="GO:0017110">
    <property type="term" value="F:nucleoside diphosphate phosphatase activity"/>
    <property type="evidence" value="ECO:0000314"/>
    <property type="project" value="UniProtKB"/>
</dbReference>
<dbReference type="GO" id="GO:0017111">
    <property type="term" value="F:ribonucleoside triphosphate phosphatase activity"/>
    <property type="evidence" value="ECO:0000314"/>
    <property type="project" value="UniProtKB"/>
</dbReference>
<dbReference type="GO" id="GO:0045134">
    <property type="term" value="F:UDP phosphatase activity"/>
    <property type="evidence" value="ECO:0000318"/>
    <property type="project" value="GO_Central"/>
</dbReference>
<dbReference type="GO" id="GO:0009134">
    <property type="term" value="P:nucleoside diphosphate catabolic process"/>
    <property type="evidence" value="ECO:0000318"/>
    <property type="project" value="GO_Central"/>
</dbReference>
<dbReference type="GO" id="GO:0009143">
    <property type="term" value="P:nucleoside triphosphate catabolic process"/>
    <property type="evidence" value="ECO:0007669"/>
    <property type="project" value="Ensembl"/>
</dbReference>
<dbReference type="CDD" id="cd24112">
    <property type="entry name" value="ASKHA_NBD_NTPDase3"/>
    <property type="match status" value="1"/>
</dbReference>
<dbReference type="FunFam" id="3.30.420.150:FF:000002">
    <property type="entry name" value="Ectonucleoside triphosphate diphosphohydrolase 1"/>
    <property type="match status" value="1"/>
</dbReference>
<dbReference type="FunFam" id="3.30.420.40:FF:000068">
    <property type="entry name" value="Ectonucleoside triphosphate diphosphohydrolase 1"/>
    <property type="match status" value="1"/>
</dbReference>
<dbReference type="Gene3D" id="3.30.420.40">
    <property type="match status" value="1"/>
</dbReference>
<dbReference type="Gene3D" id="3.30.420.150">
    <property type="entry name" value="Exopolyphosphatase. Domain 2"/>
    <property type="match status" value="1"/>
</dbReference>
<dbReference type="InterPro" id="IPR000407">
    <property type="entry name" value="GDA1_CD39_NTPase"/>
</dbReference>
<dbReference type="PANTHER" id="PTHR11782">
    <property type="entry name" value="ADENOSINE/GUANOSINE DIPHOSPHATASE"/>
    <property type="match status" value="1"/>
</dbReference>
<dbReference type="PANTHER" id="PTHR11782:SF38">
    <property type="entry name" value="ECTONUCLEOSIDE TRIPHOSPHATE DIPHOSPHOHYDROLASE 3"/>
    <property type="match status" value="1"/>
</dbReference>
<dbReference type="Pfam" id="PF01150">
    <property type="entry name" value="GDA1_CD39"/>
    <property type="match status" value="1"/>
</dbReference>
<dbReference type="PROSITE" id="PS01238">
    <property type="entry name" value="GDA1_CD39_NTPASE"/>
    <property type="match status" value="1"/>
</dbReference>
<feature type="chain" id="PRO_0000209910" description="Ectonucleoside triphosphate diphosphohydrolase 3">
    <location>
        <begin position="1"/>
        <end position="529"/>
    </location>
</feature>
<feature type="topological domain" description="Cytoplasmic" evidence="3">
    <location>
        <begin position="1"/>
        <end position="22"/>
    </location>
</feature>
<feature type="transmembrane region" description="Helical" evidence="3">
    <location>
        <begin position="23"/>
        <end position="43"/>
    </location>
</feature>
<feature type="topological domain" description="Extracellular" evidence="3">
    <location>
        <begin position="44"/>
        <end position="485"/>
    </location>
</feature>
<feature type="transmembrane region" description="Helical" evidence="3">
    <location>
        <begin position="486"/>
        <end position="506"/>
    </location>
</feature>
<feature type="topological domain" description="Cytoplasmic" evidence="3">
    <location>
        <begin position="507"/>
        <end position="529"/>
    </location>
</feature>
<feature type="active site" description="Proton acceptor" evidence="1">
    <location>
        <position position="182"/>
    </location>
</feature>
<feature type="binding site" evidence="1">
    <location>
        <begin position="222"/>
        <end position="226"/>
    </location>
    <ligand>
        <name>ATP</name>
        <dbReference type="ChEBI" id="CHEBI:30616"/>
    </ligand>
</feature>
<feature type="glycosylation site" description="N-linked (GlcNAc...) asparagine" evidence="3">
    <location>
        <position position="81"/>
    </location>
</feature>
<feature type="glycosylation site" description="N-linked (GlcNAc...) asparagine" evidence="3">
    <location>
        <position position="149"/>
    </location>
</feature>
<feature type="glycosylation site" description="N-linked (GlcNAc...) asparagine" evidence="3">
    <location>
        <position position="238"/>
    </location>
</feature>
<feature type="glycosylation site" description="N-linked (GlcNAc...) asparagine" evidence="3">
    <location>
        <position position="381"/>
    </location>
</feature>
<feature type="glycosylation site" description="N-linked (GlcNAc...) asparagine" evidence="3">
    <location>
        <position position="392"/>
    </location>
</feature>
<feature type="glycosylation site" description="N-linked (GlcNAc...) asparagine" evidence="3">
    <location>
        <position position="402"/>
    </location>
</feature>
<feature type="glycosylation site" description="N-linked (GlcNAc...) asparagine" evidence="3">
    <location>
        <position position="454"/>
    </location>
</feature>
<feature type="disulfide bond" evidence="7">
    <location>
        <begin position="92"/>
        <end position="116"/>
    </location>
</feature>
<feature type="disulfide bond" evidence="7">
    <location>
        <begin position="261"/>
        <end position="308"/>
    </location>
</feature>
<feature type="disulfide bond" evidence="7">
    <location>
        <begin position="289"/>
        <end position="334"/>
    </location>
</feature>
<feature type="disulfide bond" evidence="7">
    <location>
        <begin position="347"/>
        <end position="353"/>
    </location>
</feature>
<feature type="disulfide bond" evidence="7">
    <location>
        <begin position="399"/>
        <end position="422"/>
    </location>
</feature>
<feature type="splice variant" id="VSP_054237" description="In isoform 2." evidence="9">
    <original>VGNSSIAWSLGYMLSLTNQIPAESPLIRLPIEPPVFVGTLAFFTAAALLCLAFLAYLCSATRRKRHSEHAFDHAVDSD</original>
    <variation>E</variation>
    <location>
        <begin position="452"/>
        <end position="529"/>
    </location>
</feature>
<feature type="sequence variant" id="VAR_070813" description="In dbSNP:rs17852714." evidence="6">
    <original>I</original>
    <variation>V</variation>
    <location>
        <position position="24"/>
    </location>
</feature>
<feature type="sequence variant" id="VAR_061384" description="In dbSNP:rs34266806.">
    <original>R</original>
    <variation>Q</variation>
    <location>
        <position position="264"/>
    </location>
</feature>
<feature type="sequence variant" id="VAR_027541" description="In dbSNP:rs4470483.">
    <original>E</original>
    <variation>D</variation>
    <location>
        <position position="440"/>
    </location>
</feature>
<feature type="sequence variant" id="VAR_027542" description="In dbSNP:rs1047855." evidence="8">
    <original>A</original>
    <variation>V</variation>
    <location>
        <position position="496"/>
    </location>
</feature>
<feature type="sequence variant" id="VAR_027543" description="In dbSNP:rs3733167.">
    <original>L</original>
    <variation>F</variation>
    <location>
        <position position="505"/>
    </location>
</feature>
<feature type="mutagenesis site" description="Increase of activity." evidence="5">
    <original>R</original>
    <variation>G</variation>
    <location>
        <position position="67"/>
    </location>
</feature>
<feature type="mutagenesis site" description="Loss of activity." evidence="5">
    <original>R</original>
    <variation>A</variation>
    <location>
        <position position="143"/>
    </location>
</feature>
<feature type="mutagenesis site" description="Increase of activity." evidence="5">
    <original>R</original>
    <variation>K</variation>
    <location>
        <position position="143"/>
    </location>
</feature>
<feature type="mutagenesis site" description="No effect." evidence="5">
    <original>R</original>
    <variation>N</variation>
    <location>
        <position position="146"/>
    </location>
</feature>
<feature type="mutagenesis site" description="Increase of ATPase activity, decrease of ADPase activity." evidence="5">
    <original>R</original>
    <variation>P</variation>
    <location>
        <position position="146"/>
    </location>
</feature>
<feature type="mutagenesis site" description="Increase of activity." evidence="5">
    <original>R</original>
    <variation>T</variation>
    <location>
        <position position="146"/>
    </location>
</feature>
<feature type="mutagenesis site" description="Complete loss of activity." evidence="5">
    <original>E</original>
    <variation>D</variation>
    <location>
        <position position="182"/>
    </location>
</feature>
<feature type="mutagenesis site" description="Complete loss of activity." evidence="5">
    <original>E</original>
    <variation>Q</variation>
    <location>
        <position position="182"/>
    </location>
</feature>
<feature type="mutagenesis site" description="Complete loss of activity." evidence="4">
    <original>W</original>
    <variation>A</variation>
    <location>
        <position position="187"/>
    </location>
</feature>
<feature type="mutagenesis site" description="Loss of ATPase activity, increase of ADPase activity." evidence="5">
    <original>N</original>
    <variation>A</variation>
    <location>
        <position position="191"/>
    </location>
</feature>
<feature type="mutagenesis site" description="Increase of activity." evidence="4">
    <original>D</original>
    <variation>E</variation>
    <location>
        <position position="219"/>
    </location>
</feature>
<feature type="mutagenesis site" description="Complete loss of activity." evidence="5">
    <original>S</original>
    <variation>A</variation>
    <location>
        <position position="224"/>
    </location>
</feature>
<feature type="mutagenesis site" description="Loss of activity." evidence="5">
    <original>Q</original>
    <variation>A</variation>
    <location>
        <position position="226"/>
    </location>
</feature>
<feature type="mutagenesis site" description="Increase of activity, especially the ATP hydrolysis." evidence="4">
    <original>W</original>
    <variation>A</variation>
    <location>
        <position position="459"/>
    </location>
</feature>
<proteinExistence type="evidence at protein level"/>